<evidence type="ECO:0000250" key="1"/>
<evidence type="ECO:0000255" key="2"/>
<evidence type="ECO:0000255" key="3">
    <source>
        <dbReference type="PROSITE-ProRule" id="PRU00024"/>
    </source>
</evidence>
<evidence type="ECO:0000255" key="4">
    <source>
        <dbReference type="PROSITE-ProRule" id="PRU00175"/>
    </source>
</evidence>
<feature type="chain" id="PRO_0000416766" description="Tripartite motif containing 13">
    <location>
        <begin position="1"/>
        <end position="408"/>
    </location>
</feature>
<feature type="transmembrane region" description="Helical" evidence="2">
    <location>
        <begin position="322"/>
        <end position="342"/>
    </location>
</feature>
<feature type="zinc finger region" description="RING-type" evidence="4">
    <location>
        <begin position="10"/>
        <end position="58"/>
    </location>
</feature>
<feature type="zinc finger region" description="B box-type" evidence="3">
    <location>
        <begin position="89"/>
        <end position="131"/>
    </location>
</feature>
<feature type="binding site" evidence="3">
    <location>
        <position position="94"/>
    </location>
    <ligand>
        <name>Zn(2+)</name>
        <dbReference type="ChEBI" id="CHEBI:29105"/>
    </ligand>
</feature>
<feature type="binding site" evidence="3">
    <location>
        <position position="97"/>
    </location>
    <ligand>
        <name>Zn(2+)</name>
        <dbReference type="ChEBI" id="CHEBI:29105"/>
    </ligand>
</feature>
<feature type="binding site" evidence="3">
    <location>
        <position position="117"/>
    </location>
    <ligand>
        <name>Zn(2+)</name>
        <dbReference type="ChEBI" id="CHEBI:29105"/>
    </ligand>
</feature>
<feature type="binding site" evidence="3">
    <location>
        <position position="123"/>
    </location>
    <ligand>
        <name>Zn(2+)</name>
        <dbReference type="ChEBI" id="CHEBI:29105"/>
    </ligand>
</feature>
<keyword id="KW-0256">Endoplasmic reticulum</keyword>
<keyword id="KW-0436">Ligase</keyword>
<keyword id="KW-0472">Membrane</keyword>
<keyword id="KW-0479">Metal-binding</keyword>
<keyword id="KW-1185">Reference proteome</keyword>
<keyword id="KW-0812">Transmembrane</keyword>
<keyword id="KW-1133">Transmembrane helix</keyword>
<keyword id="KW-0833">Ubl conjugation pathway</keyword>
<keyword id="KW-0862">Zinc</keyword>
<keyword id="KW-0863">Zinc-finger</keyword>
<proteinExistence type="inferred from homology"/>
<reference key="1">
    <citation type="journal article" date="2010" name="Science">
        <title>The genome of the Western clawed frog Xenopus tropicalis.</title>
        <authorList>
            <person name="Hellsten U."/>
            <person name="Harland R.M."/>
            <person name="Gilchrist M.J."/>
            <person name="Hendrix D."/>
            <person name="Jurka J."/>
            <person name="Kapitonov V."/>
            <person name="Ovcharenko I."/>
            <person name="Putnam N.H."/>
            <person name="Shu S."/>
            <person name="Taher L."/>
            <person name="Blitz I.L."/>
            <person name="Blumberg B."/>
            <person name="Dichmann D.S."/>
            <person name="Dubchak I."/>
            <person name="Amaya E."/>
            <person name="Detter J.C."/>
            <person name="Fletcher R."/>
            <person name="Gerhard D.S."/>
            <person name="Goodstein D."/>
            <person name="Graves T."/>
            <person name="Grigoriev I.V."/>
            <person name="Grimwood J."/>
            <person name="Kawashima T."/>
            <person name="Lindquist E."/>
            <person name="Lucas S.M."/>
            <person name="Mead P.E."/>
            <person name="Mitros T."/>
            <person name="Ogino H."/>
            <person name="Ohta Y."/>
            <person name="Poliakov A.V."/>
            <person name="Pollet N."/>
            <person name="Robert J."/>
            <person name="Salamov A."/>
            <person name="Sater A.K."/>
            <person name="Schmutz J."/>
            <person name="Terry A."/>
            <person name="Vize P.D."/>
            <person name="Warren W.C."/>
            <person name="Wells D."/>
            <person name="Wills A."/>
            <person name="Wilson R.K."/>
            <person name="Zimmerman L.B."/>
            <person name="Zorn A.M."/>
            <person name="Grainger R."/>
            <person name="Grammer T."/>
            <person name="Khokha M.K."/>
            <person name="Richardson P.M."/>
            <person name="Rokhsar D.S."/>
        </authorList>
    </citation>
    <scope>NUCLEOTIDE SEQUENCE [LARGE SCALE GENOMIC DNA]</scope>
</reference>
<comment type="function">
    <text evidence="1">E3 ubiquitin ligase involved in the retrotranslocation and turnover of membrane and secretory proteins from the ER through a set of processes named ER-associated degradation (ERAD). This process acts on misfolded proteins as well as in the regulated degradation of correctly folded proteins (By similarity).</text>
</comment>
<comment type="pathway">
    <text>Protein modification; protein ubiquitination.</text>
</comment>
<comment type="subcellular location">
    <subcellularLocation>
        <location evidence="1">Endoplasmic reticulum membrane</location>
        <topology evidence="1">Single-pass membrane protein</topology>
    </subcellularLocation>
    <text evidence="1">Also concentrates at the perinuclear endoplasmic reticulum.</text>
</comment>
<comment type="domain">
    <text evidence="1">The C-terminal transmembrane domain is indispensable for the localization to the ER.</text>
</comment>
<accession>F6ZQ54</accession>
<protein>
    <recommendedName>
        <fullName>Tripartite motif containing 13</fullName>
    </recommendedName>
</protein>
<dbReference type="EMBL" id="AAMC01049541">
    <property type="status" value="NOT_ANNOTATED_CDS"/>
    <property type="molecule type" value="Genomic_DNA"/>
</dbReference>
<dbReference type="SMR" id="F6ZQ54"/>
<dbReference type="FunCoup" id="F6ZQ54">
    <property type="interactions" value="1158"/>
</dbReference>
<dbReference type="PaxDb" id="8364-ENSXETP00000034221"/>
<dbReference type="eggNOG" id="KOG2177">
    <property type="taxonomic scope" value="Eukaryota"/>
</dbReference>
<dbReference type="HOGENOM" id="CLU_053708_0_0_1"/>
<dbReference type="InParanoid" id="F6ZQ54"/>
<dbReference type="TreeFam" id="TF331669"/>
<dbReference type="UniPathway" id="UPA00143"/>
<dbReference type="Proteomes" id="UP000008143">
    <property type="component" value="Unplaced"/>
</dbReference>
<dbReference type="Bgee" id="ENSXETG00000015691">
    <property type="expression patterns" value="Expressed in heart and 4 other cell types or tissues"/>
</dbReference>
<dbReference type="GO" id="GO:0005789">
    <property type="term" value="C:endoplasmic reticulum membrane"/>
    <property type="evidence" value="ECO:0007669"/>
    <property type="project" value="UniProtKB-SubCell"/>
</dbReference>
<dbReference type="GO" id="GO:0016874">
    <property type="term" value="F:ligase activity"/>
    <property type="evidence" value="ECO:0007669"/>
    <property type="project" value="UniProtKB-KW"/>
</dbReference>
<dbReference type="GO" id="GO:0008270">
    <property type="term" value="F:zinc ion binding"/>
    <property type="evidence" value="ECO:0007669"/>
    <property type="project" value="UniProtKB-KW"/>
</dbReference>
<dbReference type="GO" id="GO:0016567">
    <property type="term" value="P:protein ubiquitination"/>
    <property type="evidence" value="ECO:0007669"/>
    <property type="project" value="UniProtKB-UniPathway"/>
</dbReference>
<dbReference type="CDD" id="cd19767">
    <property type="entry name" value="Bbox2_TRIM13_C-XI"/>
    <property type="match status" value="1"/>
</dbReference>
<dbReference type="CDD" id="cd16762">
    <property type="entry name" value="RING-HC_TRIM13_C-V"/>
    <property type="match status" value="1"/>
</dbReference>
<dbReference type="Gene3D" id="3.30.160.60">
    <property type="entry name" value="Classic Zinc Finger"/>
    <property type="match status" value="1"/>
</dbReference>
<dbReference type="Gene3D" id="3.30.40.10">
    <property type="entry name" value="Zinc/RING finger domain, C3HC4 (zinc finger)"/>
    <property type="match status" value="1"/>
</dbReference>
<dbReference type="InterPro" id="IPR047153">
    <property type="entry name" value="TRIM45/56/19-like"/>
</dbReference>
<dbReference type="InterPro" id="IPR027370">
    <property type="entry name" value="Znf-RING_euk"/>
</dbReference>
<dbReference type="InterPro" id="IPR000315">
    <property type="entry name" value="Znf_B-box"/>
</dbReference>
<dbReference type="InterPro" id="IPR001841">
    <property type="entry name" value="Znf_RING"/>
</dbReference>
<dbReference type="InterPro" id="IPR013083">
    <property type="entry name" value="Znf_RING/FYVE/PHD"/>
</dbReference>
<dbReference type="InterPro" id="IPR017907">
    <property type="entry name" value="Znf_RING_CS"/>
</dbReference>
<dbReference type="PANTHER" id="PTHR25462">
    <property type="entry name" value="BONUS, ISOFORM C-RELATED"/>
    <property type="match status" value="1"/>
</dbReference>
<dbReference type="PANTHER" id="PTHR25462:SF229">
    <property type="entry name" value="TRANSCRIPTION INTERMEDIARY FACTOR 1-BETA"/>
    <property type="match status" value="1"/>
</dbReference>
<dbReference type="Pfam" id="PF00643">
    <property type="entry name" value="zf-B_box"/>
    <property type="match status" value="1"/>
</dbReference>
<dbReference type="Pfam" id="PF13445">
    <property type="entry name" value="zf-RING_UBOX"/>
    <property type="match status" value="1"/>
</dbReference>
<dbReference type="SMART" id="SM00336">
    <property type="entry name" value="BBOX"/>
    <property type="match status" value="1"/>
</dbReference>
<dbReference type="SMART" id="SM00184">
    <property type="entry name" value="RING"/>
    <property type="match status" value="1"/>
</dbReference>
<dbReference type="SUPFAM" id="SSF57845">
    <property type="entry name" value="B-box zinc-binding domain"/>
    <property type="match status" value="1"/>
</dbReference>
<dbReference type="SUPFAM" id="SSF57850">
    <property type="entry name" value="RING/U-box"/>
    <property type="match status" value="1"/>
</dbReference>
<dbReference type="PROSITE" id="PS50119">
    <property type="entry name" value="ZF_BBOX"/>
    <property type="match status" value="1"/>
</dbReference>
<dbReference type="PROSITE" id="PS00518">
    <property type="entry name" value="ZF_RING_1"/>
    <property type="match status" value="1"/>
</dbReference>
<dbReference type="PROSITE" id="PS50089">
    <property type="entry name" value="ZF_RING_2"/>
    <property type="match status" value="1"/>
</dbReference>
<gene>
    <name type="primary">trim13</name>
</gene>
<name>TRI13_XENTR</name>
<organism>
    <name type="scientific">Xenopus tropicalis</name>
    <name type="common">Western clawed frog</name>
    <name type="synonym">Silurana tropicalis</name>
    <dbReference type="NCBI Taxonomy" id="8364"/>
    <lineage>
        <taxon>Eukaryota</taxon>
        <taxon>Metazoa</taxon>
        <taxon>Chordata</taxon>
        <taxon>Craniata</taxon>
        <taxon>Vertebrata</taxon>
        <taxon>Euteleostomi</taxon>
        <taxon>Amphibia</taxon>
        <taxon>Batrachia</taxon>
        <taxon>Anura</taxon>
        <taxon>Pipoidea</taxon>
        <taxon>Pipidae</taxon>
        <taxon>Xenopodinae</taxon>
        <taxon>Xenopus</taxon>
        <taxon>Silurana</taxon>
    </lineage>
</organism>
<sequence length="408" mass="46602">MEVLEEDLTCPICCSLFDDPRVLPCSHNFCKKCLDGVLEENSRTMQWRPSSFKCPTCRKETPTMGVNGLQVNYLLKGIVEKYNKIKVSPKMPVCKEHSDQPLNIFCSTDLKLICGSCATTGEHKKHVFSSIGDAYIQEKSSLETLFQGVEEWNSKEVHSHLDTLESNKRKALHSLAKESDKVKAYFEKLQYLLEQKKNEILSDFETLKLAVMQAYDTEINKLHTVLSEQRKACNIVEDLKNISDPFMFLQQMQEFRDKMTFIKEAPLTTGQDVNVNPAMKEFDTSMWDSIKLGEVDKLSLPQDTTSKKEPGDAKTLHSLKPILVVACLILLLVTFLCAYPFIDSLPTFTIDLQVISSYFFTTTAKAANLTILFWEQLSEELLILKQRCQTYVSVFLENVAEFVCKYKL</sequence>